<dbReference type="EMBL" id="AK001527">
    <property type="protein sequence ID" value="BAA91741.1"/>
    <property type="molecule type" value="mRNA"/>
</dbReference>
<dbReference type="EMBL" id="AK095373">
    <property type="protein sequence ID" value="BAC04539.1"/>
    <property type="molecule type" value="mRNA"/>
</dbReference>
<dbReference type="EMBL" id="AF289613">
    <property type="protein sequence ID" value="AAL55797.1"/>
    <property type="molecule type" value="mRNA"/>
</dbReference>
<dbReference type="EMBL" id="BC104751">
    <property type="protein sequence ID" value="AAI04752.1"/>
    <property type="molecule type" value="mRNA"/>
</dbReference>
<dbReference type="EMBL" id="BC105961">
    <property type="protein sequence ID" value="AAI05962.1"/>
    <property type="molecule type" value="mRNA"/>
</dbReference>
<dbReference type="EMBL" id="BC109095">
    <property type="protein sequence ID" value="AAI09096.1"/>
    <property type="molecule type" value="mRNA"/>
</dbReference>
<dbReference type="EMBL" id="AC006057">
    <property type="status" value="NOT_ANNOTATED_CDS"/>
    <property type="molecule type" value="Genomic_DNA"/>
</dbReference>
<dbReference type="EMBL" id="CH471116">
    <property type="protein sequence ID" value="EAW88809.1"/>
    <property type="molecule type" value="Genomic_DNA"/>
</dbReference>
<dbReference type="CCDS" id="CCDS8541.1">
    <molecule id="Q3KR16-1"/>
</dbReference>
<dbReference type="RefSeq" id="NP_001138328.1">
    <molecule id="Q3KR16-1"/>
    <property type="nucleotide sequence ID" value="NM_001144856.2"/>
</dbReference>
<dbReference type="RefSeq" id="NP_001138329.1">
    <property type="nucleotide sequence ID" value="NM_001144857.1"/>
</dbReference>
<dbReference type="RefSeq" id="NP_001371527.1">
    <molecule id="Q3KR16-1"/>
    <property type="nucleotide sequence ID" value="NM_001384598.1"/>
</dbReference>
<dbReference type="RefSeq" id="NP_060643.2">
    <molecule id="Q3KR16-1"/>
    <property type="nucleotide sequence ID" value="NM_018173.4"/>
</dbReference>
<dbReference type="RefSeq" id="XP_005253761.1">
    <property type="nucleotide sequence ID" value="XM_005253704.4"/>
</dbReference>
<dbReference type="SMR" id="Q3KR16"/>
<dbReference type="BioGRID" id="120497">
    <property type="interactions" value="45"/>
</dbReference>
<dbReference type="FunCoup" id="Q3KR16">
    <property type="interactions" value="201"/>
</dbReference>
<dbReference type="IntAct" id="Q3KR16">
    <property type="interactions" value="34"/>
</dbReference>
<dbReference type="STRING" id="9606.ENSP00000380185"/>
<dbReference type="GlyGen" id="Q3KR16">
    <property type="glycosylation" value="1 site, 1 O-linked glycan (1 site)"/>
</dbReference>
<dbReference type="iPTMnet" id="Q3KR16"/>
<dbReference type="PhosphoSitePlus" id="Q3KR16"/>
<dbReference type="BioMuta" id="PLEKHG6"/>
<dbReference type="DMDM" id="332278231"/>
<dbReference type="jPOST" id="Q3KR16"/>
<dbReference type="MassIVE" id="Q3KR16"/>
<dbReference type="PaxDb" id="9606-ENSP00000380185"/>
<dbReference type="PeptideAtlas" id="Q3KR16"/>
<dbReference type="ProteomicsDB" id="61734">
    <molecule id="Q3KR16-1"/>
</dbReference>
<dbReference type="ProteomicsDB" id="61735">
    <molecule id="Q3KR16-2"/>
</dbReference>
<dbReference type="ProteomicsDB" id="61736">
    <molecule id="Q3KR16-3"/>
</dbReference>
<dbReference type="Antibodypedia" id="49879">
    <property type="antibodies" value="135 antibodies from 21 providers"/>
</dbReference>
<dbReference type="DNASU" id="55200"/>
<dbReference type="Ensembl" id="ENST00000011684.11">
    <molecule id="Q3KR16-1"/>
    <property type="protein sequence ID" value="ENSP00000011684.7"/>
    <property type="gene ID" value="ENSG00000008323.16"/>
</dbReference>
<dbReference type="Ensembl" id="ENST00000304581.8">
    <molecule id="Q3KR16-3"/>
    <property type="protein sequence ID" value="ENSP00000304640.8"/>
    <property type="gene ID" value="ENSG00000008323.16"/>
</dbReference>
<dbReference type="Ensembl" id="ENST00000396988.7">
    <molecule id="Q3KR16-1"/>
    <property type="protein sequence ID" value="ENSP00000380185.3"/>
    <property type="gene ID" value="ENSG00000008323.16"/>
</dbReference>
<dbReference type="Ensembl" id="ENST00000449001.6">
    <molecule id="Q3KR16-2"/>
    <property type="protein sequence ID" value="ENSP00000393194.2"/>
    <property type="gene ID" value="ENSG00000008323.16"/>
</dbReference>
<dbReference type="Ensembl" id="ENST00000684764.1">
    <molecule id="Q3KR16-1"/>
    <property type="protein sequence ID" value="ENSP00000506982.1"/>
    <property type="gene ID" value="ENSG00000008323.16"/>
</dbReference>
<dbReference type="GeneID" id="55200"/>
<dbReference type="KEGG" id="hsa:55200"/>
<dbReference type="MANE-Select" id="ENST00000684764.1">
    <property type="protein sequence ID" value="ENSP00000506982.1"/>
    <property type="RefSeq nucleotide sequence ID" value="NM_001384598.1"/>
    <property type="RefSeq protein sequence ID" value="NP_001371527.1"/>
</dbReference>
<dbReference type="UCSC" id="uc001qnr.4">
    <molecule id="Q3KR16-1"/>
    <property type="organism name" value="human"/>
</dbReference>
<dbReference type="AGR" id="HGNC:25562"/>
<dbReference type="CTD" id="55200"/>
<dbReference type="DisGeNET" id="55200"/>
<dbReference type="GeneCards" id="PLEKHG6"/>
<dbReference type="HGNC" id="HGNC:25562">
    <property type="gene designation" value="PLEKHG6"/>
</dbReference>
<dbReference type="HPA" id="ENSG00000008323">
    <property type="expression patterns" value="Tissue enhanced (esophagus, intestine)"/>
</dbReference>
<dbReference type="MIM" id="611743">
    <property type="type" value="gene"/>
</dbReference>
<dbReference type="neXtProt" id="NX_Q3KR16"/>
<dbReference type="OpenTargets" id="ENSG00000008323"/>
<dbReference type="PharmGKB" id="PA142671165"/>
<dbReference type="VEuPathDB" id="HostDB:ENSG00000008323"/>
<dbReference type="eggNOG" id="KOG3521">
    <property type="taxonomic scope" value="Eukaryota"/>
</dbReference>
<dbReference type="GeneTree" id="ENSGT00940000161250"/>
<dbReference type="HOGENOM" id="CLU_021968_1_0_1"/>
<dbReference type="InParanoid" id="Q3KR16"/>
<dbReference type="OMA" id="SPWESSE"/>
<dbReference type="OrthoDB" id="5585231at2759"/>
<dbReference type="PAN-GO" id="Q3KR16">
    <property type="GO annotations" value="0 GO annotations based on evolutionary models"/>
</dbReference>
<dbReference type="PhylomeDB" id="Q3KR16"/>
<dbReference type="TreeFam" id="TF316755"/>
<dbReference type="PathwayCommons" id="Q3KR16"/>
<dbReference type="Reactome" id="R-HSA-8980692">
    <property type="pathway name" value="RHOA GTPase cycle"/>
</dbReference>
<dbReference type="Reactome" id="R-HSA-9013149">
    <property type="pathway name" value="RAC1 GTPase cycle"/>
</dbReference>
<dbReference type="SignaLink" id="Q3KR16"/>
<dbReference type="SIGNOR" id="Q3KR16"/>
<dbReference type="BioGRID-ORCS" id="55200">
    <property type="hits" value="28 hits in 1151 CRISPR screens"/>
</dbReference>
<dbReference type="CD-CODE" id="8C2F96ED">
    <property type="entry name" value="Centrosome"/>
</dbReference>
<dbReference type="ChiTaRS" id="PLEKHG6">
    <property type="organism name" value="human"/>
</dbReference>
<dbReference type="GenomeRNAi" id="55200"/>
<dbReference type="Pharos" id="Q3KR16">
    <property type="development level" value="Tbio"/>
</dbReference>
<dbReference type="PRO" id="PR:Q3KR16"/>
<dbReference type="Proteomes" id="UP000005640">
    <property type="component" value="Chromosome 12"/>
</dbReference>
<dbReference type="RNAct" id="Q3KR16">
    <property type="molecule type" value="protein"/>
</dbReference>
<dbReference type="Bgee" id="ENSG00000008323">
    <property type="expression patterns" value="Expressed in mucosa of transverse colon and 126 other cell types or tissues"/>
</dbReference>
<dbReference type="ExpressionAtlas" id="Q3KR16">
    <property type="expression patterns" value="baseline and differential"/>
</dbReference>
<dbReference type="GO" id="GO:0030054">
    <property type="term" value="C:cell junction"/>
    <property type="evidence" value="ECO:0000314"/>
    <property type="project" value="HPA"/>
</dbReference>
<dbReference type="GO" id="GO:0005813">
    <property type="term" value="C:centrosome"/>
    <property type="evidence" value="ECO:0000314"/>
    <property type="project" value="HPA"/>
</dbReference>
<dbReference type="GO" id="GO:0032154">
    <property type="term" value="C:cleavage furrow"/>
    <property type="evidence" value="ECO:0007669"/>
    <property type="project" value="UniProtKB-SubCell"/>
</dbReference>
<dbReference type="GO" id="GO:0005829">
    <property type="term" value="C:cytosol"/>
    <property type="evidence" value="ECO:0000304"/>
    <property type="project" value="Reactome"/>
</dbReference>
<dbReference type="GO" id="GO:0005902">
    <property type="term" value="C:microvillus"/>
    <property type="evidence" value="ECO:0007669"/>
    <property type="project" value="UniProtKB-SubCell"/>
</dbReference>
<dbReference type="GO" id="GO:0000922">
    <property type="term" value="C:spindle pole"/>
    <property type="evidence" value="ECO:0007669"/>
    <property type="project" value="UniProtKB-SubCell"/>
</dbReference>
<dbReference type="GO" id="GO:0005096">
    <property type="term" value="F:GTPase activator activity"/>
    <property type="evidence" value="ECO:0007669"/>
    <property type="project" value="UniProtKB-KW"/>
</dbReference>
<dbReference type="GO" id="GO:0005085">
    <property type="term" value="F:guanyl-nucleotide exchange factor activity"/>
    <property type="evidence" value="ECO:0000304"/>
    <property type="project" value="Reactome"/>
</dbReference>
<dbReference type="GO" id="GO:0051056">
    <property type="term" value="P:regulation of small GTPase mediated signal transduction"/>
    <property type="evidence" value="ECO:0000304"/>
    <property type="project" value="Reactome"/>
</dbReference>
<dbReference type="CDD" id="cd13244">
    <property type="entry name" value="PH_PLEKHG5_G6"/>
    <property type="match status" value="1"/>
</dbReference>
<dbReference type="CDD" id="cd00160">
    <property type="entry name" value="RhoGEF"/>
    <property type="match status" value="1"/>
</dbReference>
<dbReference type="FunFam" id="2.30.29.30:FF:000141">
    <property type="entry name" value="Pleckstrin homology domain-containing family G member 5"/>
    <property type="match status" value="1"/>
</dbReference>
<dbReference type="FunFam" id="1.20.900.10:FF:000017">
    <property type="entry name" value="pleckstrin homology domain-containing family G member 5 isoform X1"/>
    <property type="match status" value="1"/>
</dbReference>
<dbReference type="Gene3D" id="1.20.900.10">
    <property type="entry name" value="Dbl homology (DH) domain"/>
    <property type="match status" value="1"/>
</dbReference>
<dbReference type="Gene3D" id="2.30.29.30">
    <property type="entry name" value="Pleckstrin-homology domain (PH domain)/Phosphotyrosine-binding domain (PTB)"/>
    <property type="match status" value="1"/>
</dbReference>
<dbReference type="InterPro" id="IPR035899">
    <property type="entry name" value="DBL_dom_sf"/>
</dbReference>
<dbReference type="InterPro" id="IPR000219">
    <property type="entry name" value="DH_dom"/>
</dbReference>
<dbReference type="InterPro" id="IPR011993">
    <property type="entry name" value="PH-like_dom_sf"/>
</dbReference>
<dbReference type="InterPro" id="IPR001849">
    <property type="entry name" value="PH_domain"/>
</dbReference>
<dbReference type="InterPro" id="IPR042918">
    <property type="entry name" value="PLEKHG6"/>
</dbReference>
<dbReference type="PANTHER" id="PTHR47671">
    <property type="entry name" value="PLECKSTRIN DOMAIN-CONTAINING FAMILY G MEMBER 6"/>
    <property type="match status" value="1"/>
</dbReference>
<dbReference type="PANTHER" id="PTHR47671:SF1">
    <property type="entry name" value="PLECKSTRIN HOMOLOGY DOMAIN-CONTAINING FAMILY G MEMBER 6"/>
    <property type="match status" value="1"/>
</dbReference>
<dbReference type="Pfam" id="PF00621">
    <property type="entry name" value="RhoGEF"/>
    <property type="match status" value="1"/>
</dbReference>
<dbReference type="SMART" id="SM00233">
    <property type="entry name" value="PH"/>
    <property type="match status" value="1"/>
</dbReference>
<dbReference type="SMART" id="SM00325">
    <property type="entry name" value="RhoGEF"/>
    <property type="match status" value="1"/>
</dbReference>
<dbReference type="SUPFAM" id="SSF48065">
    <property type="entry name" value="DBL homology domain (DH-domain)"/>
    <property type="match status" value="1"/>
</dbReference>
<dbReference type="SUPFAM" id="SSF50729">
    <property type="entry name" value="PH domain-like"/>
    <property type="match status" value="1"/>
</dbReference>
<dbReference type="PROSITE" id="PS50010">
    <property type="entry name" value="DH_2"/>
    <property type="match status" value="1"/>
</dbReference>
<dbReference type="PROSITE" id="PS50003">
    <property type="entry name" value="PH_DOMAIN"/>
    <property type="match status" value="1"/>
</dbReference>
<comment type="function">
    <text evidence="6 7">Guanine nucleotide exchange factor activating the small GTPase RHOA, which, in turn, induces myosin filament formation. Also activates RHOG. Does not activate RAC1, or to a much lower extent than RHOA and RHOG. Part of a functional unit, involving PLEKHG6, MYH10 and RHOA, at the cleavage furrow to advance furrow ingression during cytokinesis. In epithelial cells, required for the formation of microvilli and membrane ruffles on the apical pole. Along with EZR, required for normal macropinocytosis.</text>
</comment>
<comment type="subunit">
    <text evidence="6 7 8">Interacts with MYH10. Interacts with ELMO1 and EZR (in an open conformation). Interacts with CSPP1.</text>
</comment>
<comment type="interaction">
    <interactant intactId="EBI-10240979">
        <id>Q3KR16</id>
    </interactant>
    <interactant intactId="EBI-747776">
        <id>Q53EZ4</id>
        <label>CEP55</label>
    </interactant>
    <organismsDiffer>false</organismsDiffer>
    <experiments>8</experiments>
</comment>
<comment type="subcellular location">
    <subcellularLocation>
        <location evidence="7">Cell projection</location>
        <location evidence="7">Microvillus</location>
    </subcellularLocation>
    <subcellularLocation>
        <location evidence="6">Cytoplasm</location>
        <location evidence="6">Cytoskeleton</location>
        <location evidence="6">Spindle</location>
    </subcellularLocation>
    <subcellularLocation>
        <location evidence="6">Cytoplasm</location>
        <location evidence="6">Cytoskeleton</location>
        <location evidence="6">Spindle pole</location>
    </subcellularLocation>
    <subcellularLocation>
        <location evidence="6">Cleavage furrow</location>
    </subcellularLocation>
    <text evidence="6 7">During mitosis, localizes to the spindle pole, central spindle and cleavage furrow (PubMed:16721066). In epithelial cells, recruited to the apical membrane by EZR where it participates in macropinocytosis (PubMed:17881735).</text>
</comment>
<comment type="alternative products">
    <event type="alternative splicing"/>
    <isoform>
        <id>Q3KR16-1</id>
        <name>1</name>
        <sequence type="displayed"/>
    </isoform>
    <isoform>
        <id>Q3KR16-2</id>
        <name>2</name>
        <sequence type="described" ref="VSP_028857"/>
    </isoform>
    <isoform>
        <id>Q3KR16-3</id>
        <name>3</name>
        <sequence type="described" ref="VSP_028856 VSP_028858"/>
    </isoform>
</comment>
<comment type="tissue specificity">
    <text>Highest expression in the placenta. Low levels in small intestine, lung, liver, kidney, thymus and heart.</text>
</comment>
<keyword id="KW-0025">Alternative splicing</keyword>
<keyword id="KW-0966">Cell projection</keyword>
<keyword id="KW-0963">Cytoplasm</keyword>
<keyword id="KW-0206">Cytoskeleton</keyword>
<keyword id="KW-0343">GTPase activation</keyword>
<keyword id="KW-1267">Proteomics identification</keyword>
<keyword id="KW-1185">Reference proteome</keyword>
<proteinExistence type="evidence at protein level"/>
<sequence length="790" mass="88960">MKAFGPPHEGPLQGLVASRIETYGGRHRASAQSTAGRLYPRGYPVLDPSRRRLQQYVPFARGSGQARGLSPMRLRDPEPEKRHGGHVGAGLLHSPKLKELTKAHELEVRLHTFSMFGMPRLPPEDRRHWEIGEGGDSGLTIEKSWRELVPGHKEMSQELCHQQEALWELLTTELIYVRKLKIMTDLLAAGLLNLQRVGLLMEVSAETLFGNVPSLIRTHRSFWDEVLGPTLEETRASGQPLDPIGLQSGFLTFGQRFHPYVQYCLRVKQTMAYAREQQETNPLFHAFVQWCEKHKRSGRQMLCDLLIKPHQRITKYPLLLHAVLKRSPEARAQEALNAMIEAVESFLRHINGQVRQGEEQESLAAAAQRIGPYEVLEPPSDEVEKNLRPFSTLDLTSPMLGVASEHTRQLLLEGPVRVKEGREGKLDVYLFLFSDVLLVTKPQRKADKAKVIRPPLMLEKLVCQPLRDPNSFLLIHLTEFQCVSSALLVHCPSPTDRAQWLEKTQQAQAALQKLKAEEYVQQKRELLTLYRDQDRESPSTRPSTPSLEGSQSSAEGRTPEFSTIIPHLVVTEDTDEDAPLVPDDTSDSGYGTLIPGTPTGSRSPLSRLRQRALRRDPRLTFSTLELRDIPLRPHPPDPQAPQRRSAPELPEGILKGGSLPQEDPPTWSEEEDGASERGNVVVETLHRARLRGQLPSSPTHADSAGESPWESSGEEEEEGPLFLKAGHTSLRPMRAEDMLREIREELASQRIEGAEEPRDSRPRKLTRAQLQRMRGPHIIQLDTPLSASEV</sequence>
<feature type="chain" id="PRO_0000307912" description="Pleckstrin homology domain-containing family G member 6">
    <location>
        <begin position="1"/>
        <end position="790"/>
    </location>
</feature>
<feature type="domain" description="DH" evidence="1">
    <location>
        <begin position="161"/>
        <end position="353"/>
    </location>
</feature>
<feature type="domain" description="PH" evidence="2">
    <location>
        <begin position="409"/>
        <end position="509"/>
    </location>
</feature>
<feature type="region of interest" description="Disordered" evidence="3">
    <location>
        <begin position="63"/>
        <end position="91"/>
    </location>
</feature>
<feature type="region of interest" description="Disordered" evidence="3">
    <location>
        <begin position="529"/>
        <end position="677"/>
    </location>
</feature>
<feature type="region of interest" description="Disordered" evidence="3">
    <location>
        <begin position="690"/>
        <end position="730"/>
    </location>
</feature>
<feature type="region of interest" description="Disordered" evidence="3">
    <location>
        <begin position="748"/>
        <end position="790"/>
    </location>
</feature>
<feature type="compositionally biased region" description="Basic and acidic residues" evidence="3">
    <location>
        <begin position="73"/>
        <end position="82"/>
    </location>
</feature>
<feature type="compositionally biased region" description="Basic and acidic residues" evidence="3">
    <location>
        <begin position="529"/>
        <end position="538"/>
    </location>
</feature>
<feature type="compositionally biased region" description="Basic and acidic residues" evidence="3">
    <location>
        <begin position="625"/>
        <end position="635"/>
    </location>
</feature>
<feature type="compositionally biased region" description="Basic and acidic residues" evidence="3">
    <location>
        <begin position="748"/>
        <end position="762"/>
    </location>
</feature>
<feature type="splice variant" id="VSP_028856" description="In isoform 3." evidence="10">
    <location>
        <begin position="1"/>
        <end position="470"/>
    </location>
</feature>
<feature type="splice variant" id="VSP_028857" description="In isoform 2." evidence="9">
    <original>MKAFGPPHEGPLQGLVASRIETYGGRHRASAQSTAGRLYPRGYPVL</original>
    <variation>MGCRLHAPGEKAAH</variation>
    <location>
        <begin position="1"/>
        <end position="46"/>
    </location>
</feature>
<feature type="splice variant" id="VSP_028858" description="In isoform 3." evidence="10">
    <original>SFLLIHLTEFQCVSSALLVHCPSPTDRAQWLEKTQQAQ</original>
    <variation>MCPREGGRASTIHQKTEKAFGQLLCQPLGEPKIQHPLK</variation>
    <location>
        <begin position="471"/>
        <end position="508"/>
    </location>
</feature>
<feature type="sequence variant" id="VAR_036710" description="In dbSNP:rs740842." evidence="4 5">
    <original>A</original>
    <variation>T</variation>
    <location>
        <position position="35"/>
    </location>
</feature>
<feature type="mutagenesis site" description="Loss of exchange activity." evidence="7">
    <original>N</original>
    <variation>A</variation>
    <location>
        <position position="351"/>
    </location>
</feature>
<feature type="sequence conflict" description="In Ref. 5; AAI04752." evidence="11" ref="5">
    <original>E</original>
    <variation>G</variation>
    <location>
        <position position="384"/>
    </location>
</feature>
<feature type="sequence conflict" description="In Ref. 1; BAA91741." evidence="11" ref="1">
    <original>E</original>
    <variation>D</variation>
    <location>
        <position position="459"/>
    </location>
</feature>
<gene>
    <name type="primary">PLEKHG6</name>
</gene>
<protein>
    <recommendedName>
        <fullName>Pleckstrin homology domain-containing family G member 6</fullName>
        <shortName>PH domain-containing family G member 6</shortName>
    </recommendedName>
    <alternativeName>
        <fullName>Myosin-interacting guanine nucleotide exchange factor</fullName>
        <shortName>MyoGEF</shortName>
    </alternativeName>
</protein>
<reference key="1">
    <citation type="journal article" date="2004" name="Nat. Genet.">
        <title>Complete sequencing and characterization of 21,243 full-length human cDNAs.</title>
        <authorList>
            <person name="Ota T."/>
            <person name="Suzuki Y."/>
            <person name="Nishikawa T."/>
            <person name="Otsuki T."/>
            <person name="Sugiyama T."/>
            <person name="Irie R."/>
            <person name="Wakamatsu A."/>
            <person name="Hayashi K."/>
            <person name="Sato H."/>
            <person name="Nagai K."/>
            <person name="Kimura K."/>
            <person name="Makita H."/>
            <person name="Sekine M."/>
            <person name="Obayashi M."/>
            <person name="Nishi T."/>
            <person name="Shibahara T."/>
            <person name="Tanaka T."/>
            <person name="Ishii S."/>
            <person name="Yamamoto J."/>
            <person name="Saito K."/>
            <person name="Kawai Y."/>
            <person name="Isono Y."/>
            <person name="Nakamura Y."/>
            <person name="Nagahari K."/>
            <person name="Murakami K."/>
            <person name="Yasuda T."/>
            <person name="Iwayanagi T."/>
            <person name="Wagatsuma M."/>
            <person name="Shiratori A."/>
            <person name="Sudo H."/>
            <person name="Hosoiri T."/>
            <person name="Kaku Y."/>
            <person name="Kodaira H."/>
            <person name="Kondo H."/>
            <person name="Sugawara M."/>
            <person name="Takahashi M."/>
            <person name="Kanda K."/>
            <person name="Yokoi T."/>
            <person name="Furuya T."/>
            <person name="Kikkawa E."/>
            <person name="Omura Y."/>
            <person name="Abe K."/>
            <person name="Kamihara K."/>
            <person name="Katsuta N."/>
            <person name="Sato K."/>
            <person name="Tanikawa M."/>
            <person name="Yamazaki M."/>
            <person name="Ninomiya K."/>
            <person name="Ishibashi T."/>
            <person name="Yamashita H."/>
            <person name="Murakawa K."/>
            <person name="Fujimori K."/>
            <person name="Tanai H."/>
            <person name="Kimata M."/>
            <person name="Watanabe M."/>
            <person name="Hiraoka S."/>
            <person name="Chiba Y."/>
            <person name="Ishida S."/>
            <person name="Ono Y."/>
            <person name="Takiguchi S."/>
            <person name="Watanabe S."/>
            <person name="Yosida M."/>
            <person name="Hotuta T."/>
            <person name="Kusano J."/>
            <person name="Kanehori K."/>
            <person name="Takahashi-Fujii A."/>
            <person name="Hara H."/>
            <person name="Tanase T.-O."/>
            <person name="Nomura Y."/>
            <person name="Togiya S."/>
            <person name="Komai F."/>
            <person name="Hara R."/>
            <person name="Takeuchi K."/>
            <person name="Arita M."/>
            <person name="Imose N."/>
            <person name="Musashino K."/>
            <person name="Yuuki H."/>
            <person name="Oshima A."/>
            <person name="Sasaki N."/>
            <person name="Aotsuka S."/>
            <person name="Yoshikawa Y."/>
            <person name="Matsunawa H."/>
            <person name="Ichihara T."/>
            <person name="Shiohata N."/>
            <person name="Sano S."/>
            <person name="Moriya S."/>
            <person name="Momiyama H."/>
            <person name="Satoh N."/>
            <person name="Takami S."/>
            <person name="Terashima Y."/>
            <person name="Suzuki O."/>
            <person name="Nakagawa S."/>
            <person name="Senoh A."/>
            <person name="Mizoguchi H."/>
            <person name="Goto Y."/>
            <person name="Shimizu F."/>
            <person name="Wakebe H."/>
            <person name="Hishigaki H."/>
            <person name="Watanabe T."/>
            <person name="Sugiyama A."/>
            <person name="Takemoto M."/>
            <person name="Kawakami B."/>
            <person name="Yamazaki M."/>
            <person name="Watanabe K."/>
            <person name="Kumagai A."/>
            <person name="Itakura S."/>
            <person name="Fukuzumi Y."/>
            <person name="Fujimori Y."/>
            <person name="Komiyama M."/>
            <person name="Tashiro H."/>
            <person name="Tanigami A."/>
            <person name="Fujiwara T."/>
            <person name="Ono T."/>
            <person name="Yamada K."/>
            <person name="Fujii Y."/>
            <person name="Ozaki K."/>
            <person name="Hirao M."/>
            <person name="Ohmori Y."/>
            <person name="Kawabata A."/>
            <person name="Hikiji T."/>
            <person name="Kobatake N."/>
            <person name="Inagaki H."/>
            <person name="Ikema Y."/>
            <person name="Okamoto S."/>
            <person name="Okitani R."/>
            <person name="Kawakami T."/>
            <person name="Noguchi S."/>
            <person name="Itoh T."/>
            <person name="Shigeta K."/>
            <person name="Senba T."/>
            <person name="Matsumura K."/>
            <person name="Nakajima Y."/>
            <person name="Mizuno T."/>
            <person name="Morinaga M."/>
            <person name="Sasaki M."/>
            <person name="Togashi T."/>
            <person name="Oyama M."/>
            <person name="Hata H."/>
            <person name="Watanabe M."/>
            <person name="Komatsu T."/>
            <person name="Mizushima-Sugano J."/>
            <person name="Satoh T."/>
            <person name="Shirai Y."/>
            <person name="Takahashi Y."/>
            <person name="Nakagawa K."/>
            <person name="Okumura K."/>
            <person name="Nagase T."/>
            <person name="Nomura N."/>
            <person name="Kikuchi H."/>
            <person name="Masuho Y."/>
            <person name="Yamashita R."/>
            <person name="Nakai K."/>
            <person name="Yada T."/>
            <person name="Nakamura Y."/>
            <person name="Ohara O."/>
            <person name="Isogai T."/>
            <person name="Sugano S."/>
        </authorList>
    </citation>
    <scope>NUCLEOTIDE SEQUENCE [LARGE SCALE MRNA] (ISOFORMS 1 AND 2)</scope>
    <scope>VARIANT THR-35</scope>
    <source>
        <tissue>Tongue</tissue>
    </source>
</reference>
<reference key="2">
    <citation type="journal article" date="2004" name="Proc. Natl. Acad. Sci. U.S.A.">
        <title>Large-scale cDNA transfection screening for genes related to cancer development and progression.</title>
        <authorList>
            <person name="Wan D."/>
            <person name="Gong Y."/>
            <person name="Qin W."/>
            <person name="Zhang P."/>
            <person name="Li J."/>
            <person name="Wei L."/>
            <person name="Zhou X."/>
            <person name="Li H."/>
            <person name="Qiu X."/>
            <person name="Zhong F."/>
            <person name="He L."/>
            <person name="Yu J."/>
            <person name="Yao G."/>
            <person name="Jiang H."/>
            <person name="Qian L."/>
            <person name="Yu Y."/>
            <person name="Shu H."/>
            <person name="Chen X."/>
            <person name="Xu H."/>
            <person name="Guo M."/>
            <person name="Pan Z."/>
            <person name="Chen Y."/>
            <person name="Ge C."/>
            <person name="Yang S."/>
            <person name="Gu J."/>
        </authorList>
    </citation>
    <scope>NUCLEOTIDE SEQUENCE [LARGE SCALE MRNA] (ISOFORM 3)</scope>
</reference>
<reference key="3">
    <citation type="journal article" date="2006" name="Nature">
        <title>The finished DNA sequence of human chromosome 12.</title>
        <authorList>
            <person name="Scherer S.E."/>
            <person name="Muzny D.M."/>
            <person name="Buhay C.J."/>
            <person name="Chen R."/>
            <person name="Cree A."/>
            <person name="Ding Y."/>
            <person name="Dugan-Rocha S."/>
            <person name="Gill R."/>
            <person name="Gunaratne P."/>
            <person name="Harris R.A."/>
            <person name="Hawes A.C."/>
            <person name="Hernandez J."/>
            <person name="Hodgson A.V."/>
            <person name="Hume J."/>
            <person name="Jackson A."/>
            <person name="Khan Z.M."/>
            <person name="Kovar-Smith C."/>
            <person name="Lewis L.R."/>
            <person name="Lozado R.J."/>
            <person name="Metzker M.L."/>
            <person name="Milosavljevic A."/>
            <person name="Miner G.R."/>
            <person name="Montgomery K.T."/>
            <person name="Morgan M.B."/>
            <person name="Nazareth L.V."/>
            <person name="Scott G."/>
            <person name="Sodergren E."/>
            <person name="Song X.-Z."/>
            <person name="Steffen D."/>
            <person name="Lovering R.C."/>
            <person name="Wheeler D.A."/>
            <person name="Worley K.C."/>
            <person name="Yuan Y."/>
            <person name="Zhang Z."/>
            <person name="Adams C.Q."/>
            <person name="Ansari-Lari M.A."/>
            <person name="Ayele M."/>
            <person name="Brown M.J."/>
            <person name="Chen G."/>
            <person name="Chen Z."/>
            <person name="Clerc-Blankenburg K.P."/>
            <person name="Davis C."/>
            <person name="Delgado O."/>
            <person name="Dinh H.H."/>
            <person name="Draper H."/>
            <person name="Gonzalez-Garay M.L."/>
            <person name="Havlak P."/>
            <person name="Jackson L.R."/>
            <person name="Jacob L.S."/>
            <person name="Kelly S.H."/>
            <person name="Li L."/>
            <person name="Li Z."/>
            <person name="Liu J."/>
            <person name="Liu W."/>
            <person name="Lu J."/>
            <person name="Maheshwari M."/>
            <person name="Nguyen B.-V."/>
            <person name="Okwuonu G.O."/>
            <person name="Pasternak S."/>
            <person name="Perez L.M."/>
            <person name="Plopper F.J.H."/>
            <person name="Santibanez J."/>
            <person name="Shen H."/>
            <person name="Tabor P.E."/>
            <person name="Verduzco D."/>
            <person name="Waldron L."/>
            <person name="Wang Q."/>
            <person name="Williams G.A."/>
            <person name="Zhang J."/>
            <person name="Zhou J."/>
            <person name="Allen C.C."/>
            <person name="Amin A.G."/>
            <person name="Anyalebechi V."/>
            <person name="Bailey M."/>
            <person name="Barbaria J.A."/>
            <person name="Bimage K.E."/>
            <person name="Bryant N.P."/>
            <person name="Burch P.E."/>
            <person name="Burkett C.E."/>
            <person name="Burrell K.L."/>
            <person name="Calderon E."/>
            <person name="Cardenas V."/>
            <person name="Carter K."/>
            <person name="Casias K."/>
            <person name="Cavazos I."/>
            <person name="Cavazos S.R."/>
            <person name="Ceasar H."/>
            <person name="Chacko J."/>
            <person name="Chan S.N."/>
            <person name="Chavez D."/>
            <person name="Christopoulos C."/>
            <person name="Chu J."/>
            <person name="Cockrell R."/>
            <person name="Cox C.D."/>
            <person name="Dang M."/>
            <person name="Dathorne S.R."/>
            <person name="David R."/>
            <person name="Davis C.M."/>
            <person name="Davy-Carroll L."/>
            <person name="Deshazo D.R."/>
            <person name="Donlin J.E."/>
            <person name="D'Souza L."/>
            <person name="Eaves K.A."/>
            <person name="Egan A."/>
            <person name="Emery-Cohen A.J."/>
            <person name="Escotto M."/>
            <person name="Flagg N."/>
            <person name="Forbes L.D."/>
            <person name="Gabisi A.M."/>
            <person name="Garza M."/>
            <person name="Hamilton C."/>
            <person name="Henderson N."/>
            <person name="Hernandez O."/>
            <person name="Hines S."/>
            <person name="Hogues M.E."/>
            <person name="Huang M."/>
            <person name="Idlebird D.G."/>
            <person name="Johnson R."/>
            <person name="Jolivet A."/>
            <person name="Jones S."/>
            <person name="Kagan R."/>
            <person name="King L.M."/>
            <person name="Leal B."/>
            <person name="Lebow H."/>
            <person name="Lee S."/>
            <person name="LeVan J.M."/>
            <person name="Lewis L.C."/>
            <person name="London P."/>
            <person name="Lorensuhewa L.M."/>
            <person name="Loulseged H."/>
            <person name="Lovett D.A."/>
            <person name="Lucier A."/>
            <person name="Lucier R.L."/>
            <person name="Ma J."/>
            <person name="Madu R.C."/>
            <person name="Mapua P."/>
            <person name="Martindale A.D."/>
            <person name="Martinez E."/>
            <person name="Massey E."/>
            <person name="Mawhiney S."/>
            <person name="Meador M.G."/>
            <person name="Mendez S."/>
            <person name="Mercado C."/>
            <person name="Mercado I.C."/>
            <person name="Merritt C.E."/>
            <person name="Miner Z.L."/>
            <person name="Minja E."/>
            <person name="Mitchell T."/>
            <person name="Mohabbat F."/>
            <person name="Mohabbat K."/>
            <person name="Montgomery B."/>
            <person name="Moore N."/>
            <person name="Morris S."/>
            <person name="Munidasa M."/>
            <person name="Ngo R.N."/>
            <person name="Nguyen N.B."/>
            <person name="Nickerson E."/>
            <person name="Nwaokelemeh O.O."/>
            <person name="Nwokenkwo S."/>
            <person name="Obregon M."/>
            <person name="Oguh M."/>
            <person name="Oragunye N."/>
            <person name="Oviedo R.J."/>
            <person name="Parish B.J."/>
            <person name="Parker D.N."/>
            <person name="Parrish J."/>
            <person name="Parks K.L."/>
            <person name="Paul H.A."/>
            <person name="Payton B.A."/>
            <person name="Perez A."/>
            <person name="Perrin W."/>
            <person name="Pickens A."/>
            <person name="Primus E.L."/>
            <person name="Pu L.-L."/>
            <person name="Puazo M."/>
            <person name="Quiles M.M."/>
            <person name="Quiroz J.B."/>
            <person name="Rabata D."/>
            <person name="Reeves K."/>
            <person name="Ruiz S.J."/>
            <person name="Shao H."/>
            <person name="Sisson I."/>
            <person name="Sonaike T."/>
            <person name="Sorelle R.P."/>
            <person name="Sutton A.E."/>
            <person name="Svatek A.F."/>
            <person name="Svetz L.A."/>
            <person name="Tamerisa K.S."/>
            <person name="Taylor T.R."/>
            <person name="Teague B."/>
            <person name="Thomas N."/>
            <person name="Thorn R.D."/>
            <person name="Trejos Z.Y."/>
            <person name="Trevino B.K."/>
            <person name="Ukegbu O.N."/>
            <person name="Urban J.B."/>
            <person name="Vasquez L.I."/>
            <person name="Vera V.A."/>
            <person name="Villasana D.M."/>
            <person name="Wang L."/>
            <person name="Ward-Moore S."/>
            <person name="Warren J.T."/>
            <person name="Wei X."/>
            <person name="White F."/>
            <person name="Williamson A.L."/>
            <person name="Wleczyk R."/>
            <person name="Wooden H.S."/>
            <person name="Wooden S.H."/>
            <person name="Yen J."/>
            <person name="Yoon L."/>
            <person name="Yoon V."/>
            <person name="Zorrilla S.E."/>
            <person name="Nelson D."/>
            <person name="Kucherlapati R."/>
            <person name="Weinstock G."/>
            <person name="Gibbs R.A."/>
        </authorList>
    </citation>
    <scope>NUCLEOTIDE SEQUENCE [LARGE SCALE GENOMIC DNA]</scope>
</reference>
<reference key="4">
    <citation type="submission" date="2005-09" db="EMBL/GenBank/DDBJ databases">
        <authorList>
            <person name="Mural R.J."/>
            <person name="Istrail S."/>
            <person name="Sutton G.G."/>
            <person name="Florea L."/>
            <person name="Halpern A.L."/>
            <person name="Mobarry C.M."/>
            <person name="Lippert R."/>
            <person name="Walenz B."/>
            <person name="Shatkay H."/>
            <person name="Dew I."/>
            <person name="Miller J.R."/>
            <person name="Flanigan M.J."/>
            <person name="Edwards N.J."/>
            <person name="Bolanos R."/>
            <person name="Fasulo D."/>
            <person name="Halldorsson B.V."/>
            <person name="Hannenhalli S."/>
            <person name="Turner R."/>
            <person name="Yooseph S."/>
            <person name="Lu F."/>
            <person name="Nusskern D.R."/>
            <person name="Shue B.C."/>
            <person name="Zheng X.H."/>
            <person name="Zhong F."/>
            <person name="Delcher A.L."/>
            <person name="Huson D.H."/>
            <person name="Kravitz S.A."/>
            <person name="Mouchard L."/>
            <person name="Reinert K."/>
            <person name="Remington K.A."/>
            <person name="Clark A.G."/>
            <person name="Waterman M.S."/>
            <person name="Eichler E.E."/>
            <person name="Adams M.D."/>
            <person name="Hunkapiller M.W."/>
            <person name="Myers E.W."/>
            <person name="Venter J.C."/>
        </authorList>
    </citation>
    <scope>NUCLEOTIDE SEQUENCE [LARGE SCALE GENOMIC DNA]</scope>
</reference>
<reference key="5">
    <citation type="journal article" date="2004" name="Genome Res.">
        <title>The status, quality, and expansion of the NIH full-length cDNA project: the Mammalian Gene Collection (MGC).</title>
        <authorList>
            <consortium name="The MGC Project Team"/>
        </authorList>
    </citation>
    <scope>NUCLEOTIDE SEQUENCE [LARGE SCALE MRNA] (ISOFORM 1)</scope>
    <scope>VARIANT THR-35</scope>
</reference>
<reference key="6">
    <citation type="journal article" date="2006" name="Cell Cycle">
        <title>A novel guanine nucleotide exchange factor MyoGEF is required for cytokinesis.</title>
        <authorList>
            <person name="Wu D."/>
            <person name="Asiedu M."/>
            <person name="Adelstein R.S."/>
            <person name="Wei Q."/>
        </authorList>
    </citation>
    <scope>FUNCTION</scope>
    <scope>INTERACTION WITH MYH10</scope>
    <scope>SUBCELLULAR LOCATION</scope>
</reference>
<reference key="7">
    <citation type="journal article" date="2007" name="Mol. Biol. Cell">
        <title>Interaction of ezrin with the novel guanine nucleotide exchange factor PLEKHG6 promotes RhoG-dependent apical cytoskeleton rearrangements in epithelial cells.</title>
        <authorList>
            <person name="D'Angelo R."/>
            <person name="Aresta S."/>
            <person name="Blangy A."/>
            <person name="Del Maestro L."/>
            <person name="Louvard D."/>
            <person name="Arpin M."/>
        </authorList>
    </citation>
    <scope>FUNCTION</scope>
    <scope>INTERACTION WITH ELMO1 AND EZR</scope>
    <scope>SUBCELLULAR LOCATION</scope>
    <scope>MUTAGENESIS OF ASN-351</scope>
</reference>
<reference key="8">
    <citation type="journal article" date="2009" name="Mol. Biol. Cell">
        <title>Centrosome/spindle pole-associated protein regulates cytokinesis via promoting the recruitment of MyoGEF to the central spindle.</title>
        <authorList>
            <person name="Asiedu M."/>
            <person name="Wu D."/>
            <person name="Matsumura F."/>
            <person name="Wei Q."/>
        </authorList>
    </citation>
    <scope>INTERACTION WITH CSPP1</scope>
</reference>
<organism>
    <name type="scientific">Homo sapiens</name>
    <name type="common">Human</name>
    <dbReference type="NCBI Taxonomy" id="9606"/>
    <lineage>
        <taxon>Eukaryota</taxon>
        <taxon>Metazoa</taxon>
        <taxon>Chordata</taxon>
        <taxon>Craniata</taxon>
        <taxon>Vertebrata</taxon>
        <taxon>Euteleostomi</taxon>
        <taxon>Mammalia</taxon>
        <taxon>Eutheria</taxon>
        <taxon>Euarchontoglires</taxon>
        <taxon>Primates</taxon>
        <taxon>Haplorrhini</taxon>
        <taxon>Catarrhini</taxon>
        <taxon>Hominidae</taxon>
        <taxon>Homo</taxon>
    </lineage>
</organism>
<evidence type="ECO:0000255" key="1">
    <source>
        <dbReference type="PROSITE-ProRule" id="PRU00062"/>
    </source>
</evidence>
<evidence type="ECO:0000255" key="2">
    <source>
        <dbReference type="PROSITE-ProRule" id="PRU00145"/>
    </source>
</evidence>
<evidence type="ECO:0000256" key="3">
    <source>
        <dbReference type="SAM" id="MobiDB-lite"/>
    </source>
</evidence>
<evidence type="ECO:0000269" key="4">
    <source>
    </source>
</evidence>
<evidence type="ECO:0000269" key="5">
    <source>
    </source>
</evidence>
<evidence type="ECO:0000269" key="6">
    <source>
    </source>
</evidence>
<evidence type="ECO:0000269" key="7">
    <source>
    </source>
</evidence>
<evidence type="ECO:0000269" key="8">
    <source>
    </source>
</evidence>
<evidence type="ECO:0000303" key="9">
    <source>
    </source>
</evidence>
<evidence type="ECO:0000303" key="10">
    <source>
    </source>
</evidence>
<evidence type="ECO:0000305" key="11"/>
<name>PKHG6_HUMAN</name>
<accession>Q3KR16</accession>
<accession>Q3SWR1</accession>
<accession>Q8N1P1</accession>
<accession>Q8WYY1</accession>
<accession>Q9H8F4</accession>
<accession>Q9NVK9</accession>